<protein>
    <recommendedName>
        <fullName>Thiol:disulfide interchange protein HelX</fullName>
    </recommendedName>
    <alternativeName>
        <fullName>Cytochrome c biogenesis protein HelX</fullName>
    </alternativeName>
</protein>
<evidence type="ECO:0000250" key="1"/>
<evidence type="ECO:0000255" key="2"/>
<evidence type="ECO:0000255" key="3">
    <source>
        <dbReference type="PROSITE-ProRule" id="PRU00691"/>
    </source>
</evidence>
<evidence type="ECO:0000305" key="4"/>
<gene>
    <name type="primary">helX</name>
    <name type="synonym">ccmG</name>
    <name type="ordered locus">RCAP_rcc01789</name>
</gene>
<keyword id="KW-0201">Cytochrome c-type biogenesis</keyword>
<keyword id="KW-1015">Disulfide bond</keyword>
<keyword id="KW-0574">Periplasm</keyword>
<keyword id="KW-0676">Redox-active center</keyword>
<keyword id="KW-1185">Reference proteome</keyword>
<keyword id="KW-0732">Signal</keyword>
<accession>P36893</accession>
<accession>D5AU95</accession>
<dbReference type="EMBL" id="M96013">
    <property type="protein sequence ID" value="AAA03178.1"/>
    <property type="molecule type" value="Unassigned_DNA"/>
</dbReference>
<dbReference type="EMBL" id="CP001312">
    <property type="protein sequence ID" value="ADE85534.1"/>
    <property type="molecule type" value="Genomic_DNA"/>
</dbReference>
<dbReference type="PIR" id="A47384">
    <property type="entry name" value="A47384"/>
</dbReference>
<dbReference type="SMR" id="P36893"/>
<dbReference type="IntAct" id="P36893">
    <property type="interactions" value="1"/>
</dbReference>
<dbReference type="STRING" id="272942.RCAP_rcc01789"/>
<dbReference type="KEGG" id="rcp:RCAP_rcc01789"/>
<dbReference type="eggNOG" id="COG0526">
    <property type="taxonomic scope" value="Bacteria"/>
</dbReference>
<dbReference type="HOGENOM" id="CLU_042529_19_0_5"/>
<dbReference type="OrthoDB" id="9799347at2"/>
<dbReference type="Proteomes" id="UP000002361">
    <property type="component" value="Chromosome"/>
</dbReference>
<dbReference type="GO" id="GO:0030288">
    <property type="term" value="C:outer membrane-bounded periplasmic space"/>
    <property type="evidence" value="ECO:0007669"/>
    <property type="project" value="InterPro"/>
</dbReference>
<dbReference type="GO" id="GO:0015036">
    <property type="term" value="F:disulfide oxidoreductase activity"/>
    <property type="evidence" value="ECO:0007669"/>
    <property type="project" value="InterPro"/>
</dbReference>
<dbReference type="GO" id="GO:0017004">
    <property type="term" value="P:cytochrome complex assembly"/>
    <property type="evidence" value="ECO:0007669"/>
    <property type="project" value="UniProtKB-KW"/>
</dbReference>
<dbReference type="CDD" id="cd03010">
    <property type="entry name" value="TlpA_like_DsbE"/>
    <property type="match status" value="1"/>
</dbReference>
<dbReference type="Gene3D" id="3.40.30.10">
    <property type="entry name" value="Glutaredoxin"/>
    <property type="match status" value="1"/>
</dbReference>
<dbReference type="InterPro" id="IPR004799">
    <property type="entry name" value="Periplasmic_diS_OxRdtase_DsbE"/>
</dbReference>
<dbReference type="InterPro" id="IPR013740">
    <property type="entry name" value="Redoxin"/>
</dbReference>
<dbReference type="InterPro" id="IPR036249">
    <property type="entry name" value="Thioredoxin-like_sf"/>
</dbReference>
<dbReference type="InterPro" id="IPR017937">
    <property type="entry name" value="Thioredoxin_CS"/>
</dbReference>
<dbReference type="InterPro" id="IPR013766">
    <property type="entry name" value="Thioredoxin_domain"/>
</dbReference>
<dbReference type="InterPro" id="IPR050553">
    <property type="entry name" value="Thioredoxin_ResA/DsbE_sf"/>
</dbReference>
<dbReference type="NCBIfam" id="TIGR00385">
    <property type="entry name" value="dsbE"/>
    <property type="match status" value="1"/>
</dbReference>
<dbReference type="PANTHER" id="PTHR42852">
    <property type="entry name" value="THIOL:DISULFIDE INTERCHANGE PROTEIN DSBE"/>
    <property type="match status" value="1"/>
</dbReference>
<dbReference type="PANTHER" id="PTHR42852:SF6">
    <property type="entry name" value="THIOL:DISULFIDE INTERCHANGE PROTEIN DSBE"/>
    <property type="match status" value="1"/>
</dbReference>
<dbReference type="Pfam" id="PF08534">
    <property type="entry name" value="Redoxin"/>
    <property type="match status" value="1"/>
</dbReference>
<dbReference type="SUPFAM" id="SSF52833">
    <property type="entry name" value="Thioredoxin-like"/>
    <property type="match status" value="1"/>
</dbReference>
<dbReference type="PROSITE" id="PS00194">
    <property type="entry name" value="THIOREDOXIN_1"/>
    <property type="match status" value="1"/>
</dbReference>
<dbReference type="PROSITE" id="PS51352">
    <property type="entry name" value="THIOREDOXIN_2"/>
    <property type="match status" value="1"/>
</dbReference>
<name>HELX_RHOCB</name>
<reference key="1">
    <citation type="journal article" date="1993" name="Proc. Natl. Acad. Sci. U.S.A.">
        <title>Cytochromes c biogenesis in a photosynthetic bacterium requires a periplasmic thioredoxin-like protein.</title>
        <authorList>
            <person name="Beckman D.L."/>
            <person name="Kranz R.G."/>
        </authorList>
    </citation>
    <scope>NUCLEOTIDE SEQUENCE [GENOMIC DNA]</scope>
    <source>
        <strain>ATCC BAA-309 / NBRC 16581 / SB1003</strain>
    </source>
</reference>
<reference key="2">
    <citation type="journal article" date="2010" name="J. Bacteriol.">
        <title>Complete genome sequence of the photosynthetic purple nonsulfur bacterium Rhodobacter capsulatus SB 1003.</title>
        <authorList>
            <person name="Strnad H."/>
            <person name="Lapidus A."/>
            <person name="Paces J."/>
            <person name="Ulbrich P."/>
            <person name="Vlcek C."/>
            <person name="Paces V."/>
            <person name="Haselkorn R."/>
        </authorList>
    </citation>
    <scope>NUCLEOTIDE SEQUENCE [LARGE SCALE GENOMIC DNA]</scope>
    <source>
        <strain>ATCC BAA-309 / NBRC 16581 / SB1003</strain>
    </source>
</reference>
<sequence length="176" mass="18736">MAKPLMFLPLLVMAGFVGAGYFAMQQNDPNAMPTALAGKEAPAVRLEPLGAEAPFTDADLRDGKIKLVNFWASWCAPCRVEHPNLIGLKQDGIEIMGVNWKDTPDQAQGFLAEMGSPYTRLGADPGNKMGLDWGVAGVPETFVVDGAGRILTRIAGPLTEDVITKKIDPLLAGTAD</sequence>
<comment type="function">
    <text evidence="1">Required for disulfide bond formation in some periplasmic proteins. Also acts as a disulfide oxidoreductase in cytochromes c biogenesis. The cysteines of apocytochromes c must be in the reduced state for covalent linkage between the two moieties to occur (By similarity).</text>
</comment>
<comment type="subcellular location">
    <subcellularLocation>
        <location>Periplasm</location>
    </subcellularLocation>
</comment>
<comment type="similarity">
    <text evidence="4">Belongs to the thioredoxin family. DsbE subfamily.</text>
</comment>
<proteinExistence type="inferred from homology"/>
<feature type="signal peptide" evidence="2">
    <location>
        <begin position="1"/>
        <end position="19"/>
    </location>
</feature>
<feature type="chain" id="PRO_0000034286" description="Thiol:disulfide interchange protein HelX">
    <location>
        <begin position="20"/>
        <end position="176"/>
    </location>
</feature>
<feature type="domain" description="Thioredoxin" evidence="3">
    <location>
        <begin position="35"/>
        <end position="172"/>
    </location>
</feature>
<feature type="disulfide bond" description="Redox-active" evidence="3">
    <location>
        <begin position="75"/>
        <end position="78"/>
    </location>
</feature>
<organism>
    <name type="scientific">Rhodobacter capsulatus (strain ATCC BAA-309 / NBRC 16581 / SB1003)</name>
    <dbReference type="NCBI Taxonomy" id="272942"/>
    <lineage>
        <taxon>Bacteria</taxon>
        <taxon>Pseudomonadati</taxon>
        <taxon>Pseudomonadota</taxon>
        <taxon>Alphaproteobacteria</taxon>
        <taxon>Rhodobacterales</taxon>
        <taxon>Rhodobacter group</taxon>
        <taxon>Rhodobacter</taxon>
    </lineage>
</organism>